<accession>Q17237</accession>
<protein>
    <recommendedName>
        <fullName>Silk gland factor 3</fullName>
        <shortName>SGF-3</shortName>
    </recommendedName>
    <alternativeName>
        <fullName>POU domain protein M1</fullName>
    </alternativeName>
</protein>
<name>SGF3_BOMMO</name>
<dbReference type="EMBL" id="M64781">
    <property type="protein sequence ID" value="AAA27841.1"/>
    <property type="molecule type" value="mRNA"/>
</dbReference>
<dbReference type="PIR" id="A48763">
    <property type="entry name" value="A48763"/>
</dbReference>
<dbReference type="SMR" id="Q17237"/>
<dbReference type="FunCoup" id="Q17237">
    <property type="interactions" value="144"/>
</dbReference>
<dbReference type="STRING" id="7091.Q17237"/>
<dbReference type="PaxDb" id="7091-BGIBMGA010868-TA"/>
<dbReference type="eggNOG" id="KOG3802">
    <property type="taxonomic scope" value="Eukaryota"/>
</dbReference>
<dbReference type="InParanoid" id="Q17237"/>
<dbReference type="OrthoDB" id="6358449at2759"/>
<dbReference type="Proteomes" id="UP000005204">
    <property type="component" value="Unassembled WGS sequence"/>
</dbReference>
<dbReference type="GO" id="GO:0005634">
    <property type="term" value="C:nucleus"/>
    <property type="evidence" value="ECO:0007669"/>
    <property type="project" value="UniProtKB-SubCell"/>
</dbReference>
<dbReference type="GO" id="GO:0000981">
    <property type="term" value="F:DNA-binding transcription factor activity, RNA polymerase II-specific"/>
    <property type="evidence" value="ECO:0007669"/>
    <property type="project" value="InterPro"/>
</dbReference>
<dbReference type="GO" id="GO:0000978">
    <property type="term" value="F:RNA polymerase II cis-regulatory region sequence-specific DNA binding"/>
    <property type="evidence" value="ECO:0007669"/>
    <property type="project" value="TreeGrafter"/>
</dbReference>
<dbReference type="GO" id="GO:0048468">
    <property type="term" value="P:cell development"/>
    <property type="evidence" value="ECO:0007669"/>
    <property type="project" value="UniProtKB-ARBA"/>
</dbReference>
<dbReference type="GO" id="GO:0048699">
    <property type="term" value="P:generation of neurons"/>
    <property type="evidence" value="ECO:0007669"/>
    <property type="project" value="UniProtKB-ARBA"/>
</dbReference>
<dbReference type="GO" id="GO:0045944">
    <property type="term" value="P:positive regulation of transcription by RNA polymerase II"/>
    <property type="evidence" value="ECO:0007669"/>
    <property type="project" value="UniProtKB-ARBA"/>
</dbReference>
<dbReference type="CDD" id="cd00086">
    <property type="entry name" value="homeodomain"/>
    <property type="match status" value="1"/>
</dbReference>
<dbReference type="FunFam" id="1.10.10.60:FF:000005">
    <property type="entry name" value="POU domain protein"/>
    <property type="match status" value="1"/>
</dbReference>
<dbReference type="FunFam" id="1.10.260.40:FF:000001">
    <property type="entry name" value="POU domain protein"/>
    <property type="match status" value="1"/>
</dbReference>
<dbReference type="Gene3D" id="1.10.10.60">
    <property type="entry name" value="Homeodomain-like"/>
    <property type="match status" value="1"/>
</dbReference>
<dbReference type="Gene3D" id="1.10.260.40">
    <property type="entry name" value="lambda repressor-like DNA-binding domains"/>
    <property type="match status" value="1"/>
</dbReference>
<dbReference type="InterPro" id="IPR001356">
    <property type="entry name" value="HD"/>
</dbReference>
<dbReference type="InterPro" id="IPR017970">
    <property type="entry name" value="Homeobox_CS"/>
</dbReference>
<dbReference type="InterPro" id="IPR009057">
    <property type="entry name" value="Homeodomain-like_sf"/>
</dbReference>
<dbReference type="InterPro" id="IPR010982">
    <property type="entry name" value="Lambda_DNA-bd_dom_sf"/>
</dbReference>
<dbReference type="InterPro" id="IPR013847">
    <property type="entry name" value="POU"/>
</dbReference>
<dbReference type="InterPro" id="IPR000327">
    <property type="entry name" value="POU_dom"/>
</dbReference>
<dbReference type="InterPro" id="IPR050255">
    <property type="entry name" value="POU_domain_TF"/>
</dbReference>
<dbReference type="PANTHER" id="PTHR11636">
    <property type="entry name" value="POU DOMAIN"/>
    <property type="match status" value="1"/>
</dbReference>
<dbReference type="PANTHER" id="PTHR11636:SF89">
    <property type="entry name" value="POU DOMAIN PROTEIN 2, ISOFORM B-RELATED"/>
    <property type="match status" value="1"/>
</dbReference>
<dbReference type="Pfam" id="PF00046">
    <property type="entry name" value="Homeodomain"/>
    <property type="match status" value="1"/>
</dbReference>
<dbReference type="Pfam" id="PF00157">
    <property type="entry name" value="Pou"/>
    <property type="match status" value="1"/>
</dbReference>
<dbReference type="PRINTS" id="PR00028">
    <property type="entry name" value="POUDOMAIN"/>
</dbReference>
<dbReference type="SMART" id="SM00389">
    <property type="entry name" value="HOX"/>
    <property type="match status" value="1"/>
</dbReference>
<dbReference type="SMART" id="SM00352">
    <property type="entry name" value="POU"/>
    <property type="match status" value="1"/>
</dbReference>
<dbReference type="SUPFAM" id="SSF46689">
    <property type="entry name" value="Homeodomain-like"/>
    <property type="match status" value="1"/>
</dbReference>
<dbReference type="SUPFAM" id="SSF47413">
    <property type="entry name" value="lambda repressor-like DNA-binding domains"/>
    <property type="match status" value="1"/>
</dbReference>
<dbReference type="PROSITE" id="PS00027">
    <property type="entry name" value="HOMEOBOX_1"/>
    <property type="match status" value="1"/>
</dbReference>
<dbReference type="PROSITE" id="PS50071">
    <property type="entry name" value="HOMEOBOX_2"/>
    <property type="match status" value="1"/>
</dbReference>
<dbReference type="PROSITE" id="PS00035">
    <property type="entry name" value="POU_1"/>
    <property type="match status" value="1"/>
</dbReference>
<dbReference type="PROSITE" id="PS00465">
    <property type="entry name" value="POU_2"/>
    <property type="match status" value="1"/>
</dbReference>
<dbReference type="PROSITE" id="PS51179">
    <property type="entry name" value="POU_3"/>
    <property type="match status" value="1"/>
</dbReference>
<proteinExistence type="evidence at transcript level"/>
<sequence>MAATTYMPAEMELGNIGGYHAASPRSAEPADMKYQHPLHSGGSPSPGAPVIGNPWTSLPPADPWAMHQHHAHAHQPDVKPPPAPHDHRHLQHAAHGWHAPVVSPHYGAARPSHCMEDTQCPCTNTICSETSSPRDPLHHHAMERDQPEEDTPTSDDLEAFAKQFKQRRIKLGFTQADVGLALGTLYGNVFSQTTICRFEALQLSFKNMCKLKPLLQKWLEEADSTTGSPTSIDKIAAQGRKRKKRTSIEVSVKGALEQHFHKQPKPSAQEITSLADSLQLEKEVVRVWFCNRRQKEKRMTPPNTLGGEMMEGMGHAHYGHGDVHGSPLQHSPPGLSPQHGLPQGAHTLAAH</sequence>
<reference key="1">
    <citation type="journal article" date="1993" name="J. Biol. Chem.">
        <title>Molecular cloning of a POU domain-containing factor involved in the regulation of the Bombyx sericin-1 gene.</title>
        <authorList>
            <person name="Fukuta M."/>
            <person name="Matsuno K."/>
            <person name="Hui C.-C."/>
            <person name="Nagata T."/>
            <person name="Takiya S."/>
            <person name="Xu P.-X."/>
            <person name="Ueno K."/>
            <person name="Suzuki Y."/>
        </authorList>
    </citation>
    <scope>NUCLEOTIDE SEQUENCE [MRNA]</scope>
    <source>
        <strain>Kinshu X Showa</strain>
        <tissue>Silk gland</tissue>
    </source>
</reference>
<evidence type="ECO:0000255" key="1">
    <source>
        <dbReference type="PROSITE-ProRule" id="PRU00108"/>
    </source>
</evidence>
<evidence type="ECO:0000255" key="2">
    <source>
        <dbReference type="PROSITE-ProRule" id="PRU00530"/>
    </source>
</evidence>
<evidence type="ECO:0000256" key="3">
    <source>
        <dbReference type="SAM" id="MobiDB-lite"/>
    </source>
</evidence>
<evidence type="ECO:0000305" key="4"/>
<feature type="chain" id="PRO_0000100776" description="Silk gland factor 3">
    <location>
        <begin position="1"/>
        <end position="351"/>
    </location>
</feature>
<feature type="domain" description="POU-specific" evidence="2">
    <location>
        <begin position="149"/>
        <end position="223"/>
    </location>
</feature>
<feature type="DNA-binding region" description="Homeobox" evidence="1">
    <location>
        <begin position="241"/>
        <end position="300"/>
    </location>
</feature>
<feature type="region of interest" description="Disordered" evidence="3">
    <location>
        <begin position="61"/>
        <end position="88"/>
    </location>
</feature>
<feature type="region of interest" description="Disordered" evidence="3">
    <location>
        <begin position="131"/>
        <end position="154"/>
    </location>
</feature>
<feature type="region of interest" description="Disordered" evidence="3">
    <location>
        <begin position="314"/>
        <end position="351"/>
    </location>
</feature>
<feature type="compositionally biased region" description="Basic and acidic residues" evidence="3">
    <location>
        <begin position="135"/>
        <end position="145"/>
    </location>
</feature>
<keyword id="KW-0010">Activator</keyword>
<keyword id="KW-0217">Developmental protein</keyword>
<keyword id="KW-0221">Differentiation</keyword>
<keyword id="KW-0238">DNA-binding</keyword>
<keyword id="KW-0371">Homeobox</keyword>
<keyword id="KW-0524">Neurogenesis</keyword>
<keyword id="KW-0539">Nucleus</keyword>
<keyword id="KW-1185">Reference proteome</keyword>
<keyword id="KW-0804">Transcription</keyword>
<keyword id="KW-0805">Transcription regulation</keyword>
<comment type="function">
    <text>Involved in the transcriptional regulation of sericin-1 gene.</text>
</comment>
<comment type="subcellular location">
    <subcellularLocation>
        <location>Nucleus</location>
    </subcellularLocation>
</comment>
<comment type="tissue specificity">
    <text>Restricted to the middle silk gland.</text>
</comment>
<comment type="developmental stage">
    <text>Expression differentially regulated in the posterior and middle silk glands during the fourth molt/fifth intermolt.</text>
</comment>
<comment type="similarity">
    <text evidence="4">Belongs to the POU transcription factor family. Class-3 subfamily.</text>
</comment>
<gene>
    <name type="primary">SGF3</name>
    <name type="synonym">POU-M1</name>
</gene>
<organism>
    <name type="scientific">Bombyx mori</name>
    <name type="common">Silk moth</name>
    <dbReference type="NCBI Taxonomy" id="7091"/>
    <lineage>
        <taxon>Eukaryota</taxon>
        <taxon>Metazoa</taxon>
        <taxon>Ecdysozoa</taxon>
        <taxon>Arthropoda</taxon>
        <taxon>Hexapoda</taxon>
        <taxon>Insecta</taxon>
        <taxon>Pterygota</taxon>
        <taxon>Neoptera</taxon>
        <taxon>Endopterygota</taxon>
        <taxon>Lepidoptera</taxon>
        <taxon>Glossata</taxon>
        <taxon>Ditrysia</taxon>
        <taxon>Bombycoidea</taxon>
        <taxon>Bombycidae</taxon>
        <taxon>Bombycinae</taxon>
        <taxon>Bombyx</taxon>
    </lineage>
</organism>